<feature type="chain" id="PRO_1000128011" description="Small ribosomal subunit protein uS19">
    <location>
        <begin position="1"/>
        <end position="91"/>
    </location>
</feature>
<protein>
    <recommendedName>
        <fullName evidence="1">Small ribosomal subunit protein uS19</fullName>
    </recommendedName>
    <alternativeName>
        <fullName evidence="2">30S ribosomal protein S19</fullName>
    </alternativeName>
</protein>
<sequence>MVRSVWKGPFVEGSLLKKADAARASGRHDVIKIWSRRSTILPQFVGLTFGVYNGQKHVPVAVNEEMVGHKFGEFSPTRTFHGHAGDKKAKK</sequence>
<accession>B6JET7</accession>
<accession>F8BZC3</accession>
<evidence type="ECO:0000255" key="1">
    <source>
        <dbReference type="HAMAP-Rule" id="MF_00531"/>
    </source>
</evidence>
<evidence type="ECO:0000305" key="2"/>
<name>RS19_AFIC5</name>
<proteinExistence type="inferred from homology"/>
<dbReference type="EMBL" id="CP001196">
    <property type="protein sequence ID" value="ACI92809.1"/>
    <property type="molecule type" value="Genomic_DNA"/>
</dbReference>
<dbReference type="EMBL" id="CP002826">
    <property type="protein sequence ID" value="AEI07026.1"/>
    <property type="molecule type" value="Genomic_DNA"/>
</dbReference>
<dbReference type="RefSeq" id="WP_012562838.1">
    <property type="nucleotide sequence ID" value="NC_015684.1"/>
</dbReference>
<dbReference type="SMR" id="B6JET7"/>
<dbReference type="STRING" id="504832.OCA5_c23260"/>
<dbReference type="KEGG" id="oca:OCAR_5681"/>
<dbReference type="KEGG" id="ocg:OCA5_c23260"/>
<dbReference type="PATRIC" id="fig|504832.7.peg.2451"/>
<dbReference type="eggNOG" id="COG0185">
    <property type="taxonomic scope" value="Bacteria"/>
</dbReference>
<dbReference type="HOGENOM" id="CLU_144911_0_1_5"/>
<dbReference type="OrthoDB" id="9797833at2"/>
<dbReference type="Proteomes" id="UP000007730">
    <property type="component" value="Chromosome"/>
</dbReference>
<dbReference type="GO" id="GO:0005737">
    <property type="term" value="C:cytoplasm"/>
    <property type="evidence" value="ECO:0007669"/>
    <property type="project" value="UniProtKB-ARBA"/>
</dbReference>
<dbReference type="GO" id="GO:0015935">
    <property type="term" value="C:small ribosomal subunit"/>
    <property type="evidence" value="ECO:0007669"/>
    <property type="project" value="InterPro"/>
</dbReference>
<dbReference type="GO" id="GO:0019843">
    <property type="term" value="F:rRNA binding"/>
    <property type="evidence" value="ECO:0007669"/>
    <property type="project" value="UniProtKB-UniRule"/>
</dbReference>
<dbReference type="GO" id="GO:0003735">
    <property type="term" value="F:structural constituent of ribosome"/>
    <property type="evidence" value="ECO:0007669"/>
    <property type="project" value="InterPro"/>
</dbReference>
<dbReference type="GO" id="GO:0000028">
    <property type="term" value="P:ribosomal small subunit assembly"/>
    <property type="evidence" value="ECO:0007669"/>
    <property type="project" value="TreeGrafter"/>
</dbReference>
<dbReference type="GO" id="GO:0006412">
    <property type="term" value="P:translation"/>
    <property type="evidence" value="ECO:0007669"/>
    <property type="project" value="UniProtKB-UniRule"/>
</dbReference>
<dbReference type="FunFam" id="3.30.860.10:FF:000001">
    <property type="entry name" value="30S ribosomal protein S19"/>
    <property type="match status" value="1"/>
</dbReference>
<dbReference type="Gene3D" id="3.30.860.10">
    <property type="entry name" value="30s Ribosomal Protein S19, Chain A"/>
    <property type="match status" value="1"/>
</dbReference>
<dbReference type="HAMAP" id="MF_00531">
    <property type="entry name" value="Ribosomal_uS19"/>
    <property type="match status" value="1"/>
</dbReference>
<dbReference type="InterPro" id="IPR002222">
    <property type="entry name" value="Ribosomal_uS19"/>
</dbReference>
<dbReference type="InterPro" id="IPR005732">
    <property type="entry name" value="Ribosomal_uS19_bac-type"/>
</dbReference>
<dbReference type="InterPro" id="IPR020934">
    <property type="entry name" value="Ribosomal_uS19_CS"/>
</dbReference>
<dbReference type="InterPro" id="IPR023575">
    <property type="entry name" value="Ribosomal_uS19_SF"/>
</dbReference>
<dbReference type="NCBIfam" id="TIGR01050">
    <property type="entry name" value="rpsS_bact"/>
    <property type="match status" value="1"/>
</dbReference>
<dbReference type="PANTHER" id="PTHR11880">
    <property type="entry name" value="RIBOSOMAL PROTEIN S19P FAMILY MEMBER"/>
    <property type="match status" value="1"/>
</dbReference>
<dbReference type="PANTHER" id="PTHR11880:SF8">
    <property type="entry name" value="SMALL RIBOSOMAL SUBUNIT PROTEIN US19M"/>
    <property type="match status" value="1"/>
</dbReference>
<dbReference type="Pfam" id="PF00203">
    <property type="entry name" value="Ribosomal_S19"/>
    <property type="match status" value="1"/>
</dbReference>
<dbReference type="PIRSF" id="PIRSF002144">
    <property type="entry name" value="Ribosomal_S19"/>
    <property type="match status" value="1"/>
</dbReference>
<dbReference type="PRINTS" id="PR00975">
    <property type="entry name" value="RIBOSOMALS19"/>
</dbReference>
<dbReference type="SUPFAM" id="SSF54570">
    <property type="entry name" value="Ribosomal protein S19"/>
    <property type="match status" value="1"/>
</dbReference>
<dbReference type="PROSITE" id="PS00323">
    <property type="entry name" value="RIBOSOMAL_S19"/>
    <property type="match status" value="1"/>
</dbReference>
<gene>
    <name evidence="1" type="primary">rpsS</name>
    <name type="ordered locus">OCAR_5681</name>
    <name type="ordered locus">OCA5_c23260</name>
</gene>
<reference key="1">
    <citation type="journal article" date="2008" name="J. Bacteriol.">
        <title>Genome sequence of the chemolithoautotrophic bacterium Oligotropha carboxidovorans OM5T.</title>
        <authorList>
            <person name="Paul D."/>
            <person name="Bridges S."/>
            <person name="Burgess S.C."/>
            <person name="Dandass Y."/>
            <person name="Lawrence M.L."/>
        </authorList>
    </citation>
    <scope>NUCLEOTIDE SEQUENCE [LARGE SCALE GENOMIC DNA]</scope>
    <source>
        <strain>ATCC 49405 / DSM 1227 / KCTC 32145 / OM5</strain>
    </source>
</reference>
<reference key="2">
    <citation type="journal article" date="2011" name="J. Bacteriol.">
        <title>Complete genome sequences of the chemolithoautotrophic Oligotropha carboxidovorans strains OM4 and OM5.</title>
        <authorList>
            <person name="Volland S."/>
            <person name="Rachinger M."/>
            <person name="Strittmatter A."/>
            <person name="Daniel R."/>
            <person name="Gottschalk G."/>
            <person name="Meyer O."/>
        </authorList>
    </citation>
    <scope>NUCLEOTIDE SEQUENCE [LARGE SCALE GENOMIC DNA]</scope>
    <source>
        <strain>ATCC 49405 / DSM 1227 / KCTC 32145 / OM5</strain>
    </source>
</reference>
<comment type="function">
    <text evidence="1">Protein S19 forms a complex with S13 that binds strongly to the 16S ribosomal RNA.</text>
</comment>
<comment type="similarity">
    <text evidence="1">Belongs to the universal ribosomal protein uS19 family.</text>
</comment>
<organism>
    <name type="scientific">Afipia carboxidovorans (strain ATCC 49405 / DSM 1227 / KCTC 32145 / OM5)</name>
    <name type="common">Oligotropha carboxidovorans</name>
    <dbReference type="NCBI Taxonomy" id="504832"/>
    <lineage>
        <taxon>Bacteria</taxon>
        <taxon>Pseudomonadati</taxon>
        <taxon>Pseudomonadota</taxon>
        <taxon>Alphaproteobacteria</taxon>
        <taxon>Hyphomicrobiales</taxon>
        <taxon>Nitrobacteraceae</taxon>
        <taxon>Afipia</taxon>
    </lineage>
</organism>
<keyword id="KW-1185">Reference proteome</keyword>
<keyword id="KW-0687">Ribonucleoprotein</keyword>
<keyword id="KW-0689">Ribosomal protein</keyword>
<keyword id="KW-0694">RNA-binding</keyword>
<keyword id="KW-0699">rRNA-binding</keyword>